<feature type="chain" id="PRO_0000169982" description="2-methylcitrate synthase">
    <location>
        <begin position="1"/>
        <end position="389"/>
    </location>
</feature>
<feature type="active site" evidence="2 9">
    <location>
        <position position="235"/>
    </location>
</feature>
<feature type="active site" evidence="2 9">
    <location>
        <position position="274"/>
    </location>
</feature>
<feature type="active site" evidence="2 9">
    <location>
        <position position="325"/>
    </location>
</feature>
<feature type="binding site" evidence="1">
    <location>
        <position position="82"/>
    </location>
    <ligand>
        <name>substrate</name>
    </ligand>
</feature>
<feature type="binding site" evidence="1">
    <location>
        <position position="200"/>
    </location>
    <ligand>
        <name>substrate</name>
    </ligand>
</feature>
<feature type="binding site" evidence="2">
    <location>
        <begin position="268"/>
        <end position="272"/>
    </location>
    <ligand>
        <name>CoA</name>
        <dbReference type="ChEBI" id="CHEBI:57287"/>
    </ligand>
</feature>
<feature type="binding site" evidence="1">
    <location>
        <position position="283"/>
    </location>
    <ligand>
        <name>substrate</name>
    </ligand>
</feature>
<feature type="binding site" evidence="1">
    <location>
        <position position="350"/>
    </location>
    <ligand>
        <name>substrate</name>
    </ligand>
</feature>
<feature type="binding site" evidence="1">
    <location>
        <position position="369"/>
    </location>
    <ligand>
        <name>substrate</name>
    </ligand>
</feature>
<feature type="sequence conflict" description="In Ref. 1; AAC44815." evidence="8" ref="1">
    <original>S</original>
    <variation>N</variation>
    <location>
        <position position="144"/>
    </location>
</feature>
<feature type="strand" evidence="11">
    <location>
        <begin position="29"/>
        <end position="35"/>
    </location>
</feature>
<feature type="strand" evidence="11">
    <location>
        <begin position="42"/>
        <end position="44"/>
    </location>
</feature>
<feature type="helix" evidence="11">
    <location>
        <begin position="49"/>
        <end position="55"/>
    </location>
</feature>
<feature type="helix" evidence="11">
    <location>
        <begin position="58"/>
        <end position="66"/>
    </location>
</feature>
<feature type="strand" evidence="11">
    <location>
        <begin position="67"/>
        <end position="69"/>
    </location>
</feature>
<feature type="helix" evidence="11">
    <location>
        <begin position="73"/>
        <end position="84"/>
    </location>
</feature>
<feature type="helix" evidence="11">
    <location>
        <begin position="91"/>
        <end position="98"/>
    </location>
</feature>
<feature type="helix" evidence="11">
    <location>
        <begin position="106"/>
        <end position="120"/>
    </location>
</feature>
<feature type="helix" evidence="11">
    <location>
        <begin position="129"/>
        <end position="156"/>
    </location>
</feature>
<feature type="helix" evidence="11">
    <location>
        <begin position="169"/>
        <end position="178"/>
    </location>
</feature>
<feature type="helix" evidence="11">
    <location>
        <begin position="184"/>
        <end position="196"/>
    </location>
</feature>
<feature type="strand" evidence="11">
    <location>
        <begin position="201"/>
        <end position="203"/>
    </location>
</feature>
<feature type="helix" evidence="11">
    <location>
        <begin position="204"/>
        <end position="213"/>
    </location>
</feature>
<feature type="turn" evidence="11">
    <location>
        <begin position="214"/>
        <end position="216"/>
    </location>
</feature>
<feature type="helix" evidence="11">
    <location>
        <begin position="219"/>
        <end position="230"/>
    </location>
</feature>
<feature type="turn" evidence="11">
    <location>
        <begin position="233"/>
        <end position="235"/>
    </location>
</feature>
<feature type="helix" evidence="11">
    <location>
        <begin position="238"/>
        <end position="246"/>
    </location>
</feature>
<feature type="helix" evidence="11">
    <location>
        <begin position="252"/>
        <end position="264"/>
    </location>
</feature>
<feature type="helix" evidence="11">
    <location>
        <begin position="282"/>
        <end position="298"/>
    </location>
</feature>
<feature type="helix" evidence="11">
    <location>
        <begin position="302"/>
        <end position="318"/>
    </location>
</feature>
<feature type="turn" evidence="11">
    <location>
        <begin position="324"/>
        <end position="326"/>
    </location>
</feature>
<feature type="helix" evidence="11">
    <location>
        <begin position="327"/>
        <end position="334"/>
    </location>
</feature>
<feature type="helix" evidence="11">
    <location>
        <begin position="339"/>
        <end position="341"/>
    </location>
</feature>
<feature type="helix" evidence="11">
    <location>
        <begin position="342"/>
        <end position="363"/>
    </location>
</feature>
<feature type="strand" evidence="11">
    <location>
        <begin position="372"/>
        <end position="374"/>
    </location>
</feature>
<feature type="helix" evidence="11">
    <location>
        <begin position="385"/>
        <end position="387"/>
    </location>
</feature>
<name>PRPC_SALTY</name>
<protein>
    <recommendedName>
        <fullName evidence="5">2-methylcitrate synthase</fullName>
        <shortName evidence="6">2-MCS</shortName>
        <shortName evidence="5">mcs</shortName>
        <ecNumber evidence="3 4">2.3.3.5</ecNumber>
    </recommendedName>
    <alternativeName>
        <fullName evidence="5">Citrate synthase</fullName>
        <ecNumber evidence="3 4">2.3.3.16</ecNumber>
    </alternativeName>
</protein>
<proteinExistence type="evidence at protein level"/>
<dbReference type="EC" id="2.3.3.5" evidence="3 4"/>
<dbReference type="EC" id="2.3.3.16" evidence="3 4"/>
<dbReference type="EMBL" id="U51879">
    <property type="protein sequence ID" value="AAC44815.1"/>
    <property type="molecule type" value="Genomic_DNA"/>
</dbReference>
<dbReference type="EMBL" id="AE006468">
    <property type="protein sequence ID" value="AAL19323.1"/>
    <property type="molecule type" value="Genomic_DNA"/>
</dbReference>
<dbReference type="RefSeq" id="NP_459364.1">
    <property type="nucleotide sequence ID" value="NC_003197.2"/>
</dbReference>
<dbReference type="RefSeq" id="WP_000132749.1">
    <property type="nucleotide sequence ID" value="NC_003197.2"/>
</dbReference>
<dbReference type="PDB" id="3O8J">
    <property type="method" value="X-ray"/>
    <property type="resolution" value="2.41 A"/>
    <property type="chains" value="A/B/C/D/E/F/G/H/I/J=1-389"/>
</dbReference>
<dbReference type="PDBsum" id="3O8J"/>
<dbReference type="SMR" id="Q56063"/>
<dbReference type="STRING" id="99287.STM0369"/>
<dbReference type="PaxDb" id="99287-STM0369"/>
<dbReference type="GeneID" id="1251888"/>
<dbReference type="KEGG" id="stm:STM0369"/>
<dbReference type="PATRIC" id="fig|99287.12.peg.391"/>
<dbReference type="HOGENOM" id="CLU_025068_2_1_6"/>
<dbReference type="OMA" id="NEAAMDM"/>
<dbReference type="PhylomeDB" id="Q56063"/>
<dbReference type="BioCyc" id="MetaCyc:MONOMER-63"/>
<dbReference type="BioCyc" id="SENT99287:STM0369-MONOMER"/>
<dbReference type="BRENDA" id="2.3.3.5">
    <property type="organism ID" value="5542"/>
</dbReference>
<dbReference type="UniPathway" id="UPA00223">
    <property type="reaction ID" value="UER00717"/>
</dbReference>
<dbReference type="UniPathway" id="UPA00946"/>
<dbReference type="EvolutionaryTrace" id="Q56063"/>
<dbReference type="Proteomes" id="UP000001014">
    <property type="component" value="Chromosome"/>
</dbReference>
<dbReference type="GO" id="GO:0005737">
    <property type="term" value="C:cytoplasm"/>
    <property type="evidence" value="ECO:0007669"/>
    <property type="project" value="InterPro"/>
</dbReference>
<dbReference type="GO" id="GO:0050440">
    <property type="term" value="F:2-methylcitrate synthase activity"/>
    <property type="evidence" value="ECO:0000314"/>
    <property type="project" value="UniProtKB"/>
</dbReference>
<dbReference type="GO" id="GO:0004108">
    <property type="term" value="F:citrate (Si)-synthase activity"/>
    <property type="evidence" value="ECO:0000318"/>
    <property type="project" value="GO_Central"/>
</dbReference>
<dbReference type="GO" id="GO:0036440">
    <property type="term" value="F:citrate synthase activity"/>
    <property type="evidence" value="ECO:0000314"/>
    <property type="project" value="UniProtKB"/>
</dbReference>
<dbReference type="GO" id="GO:0005975">
    <property type="term" value="P:carbohydrate metabolic process"/>
    <property type="evidence" value="ECO:0000318"/>
    <property type="project" value="GO_Central"/>
</dbReference>
<dbReference type="GO" id="GO:0019679">
    <property type="term" value="P:propionate metabolic process, methylcitrate cycle"/>
    <property type="evidence" value="ECO:0000314"/>
    <property type="project" value="UniProtKB"/>
</dbReference>
<dbReference type="GO" id="GO:0006099">
    <property type="term" value="P:tricarboxylic acid cycle"/>
    <property type="evidence" value="ECO:0000318"/>
    <property type="project" value="GO_Central"/>
</dbReference>
<dbReference type="CDD" id="cd06117">
    <property type="entry name" value="Ec2MCS_like_1"/>
    <property type="match status" value="1"/>
</dbReference>
<dbReference type="FunFam" id="1.10.230.10:FF:000003">
    <property type="entry name" value="Citrate synthase"/>
    <property type="match status" value="1"/>
</dbReference>
<dbReference type="FunFam" id="1.10.580.10:FF:000004">
    <property type="entry name" value="Citrate synthase"/>
    <property type="match status" value="1"/>
</dbReference>
<dbReference type="Gene3D" id="1.10.580.10">
    <property type="entry name" value="Citrate Synthase, domain 1"/>
    <property type="match status" value="1"/>
</dbReference>
<dbReference type="Gene3D" id="1.10.230.10">
    <property type="entry name" value="Cytochrome P450-Terp, domain 2"/>
    <property type="match status" value="1"/>
</dbReference>
<dbReference type="InterPro" id="IPR011278">
    <property type="entry name" value="2-MeCitrate/Citrate_synth_II"/>
</dbReference>
<dbReference type="InterPro" id="IPR016142">
    <property type="entry name" value="Citrate_synth-like_lrg_a-sub"/>
</dbReference>
<dbReference type="InterPro" id="IPR016143">
    <property type="entry name" value="Citrate_synth-like_sm_a-sub"/>
</dbReference>
<dbReference type="InterPro" id="IPR002020">
    <property type="entry name" value="Citrate_synthase"/>
</dbReference>
<dbReference type="InterPro" id="IPR019810">
    <property type="entry name" value="Citrate_synthase_AS"/>
</dbReference>
<dbReference type="InterPro" id="IPR024176">
    <property type="entry name" value="Citrate_synthase_bac-typ"/>
</dbReference>
<dbReference type="InterPro" id="IPR036969">
    <property type="entry name" value="Citrate_synthase_sf"/>
</dbReference>
<dbReference type="NCBIfam" id="TIGR01800">
    <property type="entry name" value="cit_synth_II"/>
    <property type="match status" value="1"/>
</dbReference>
<dbReference type="NCBIfam" id="NF009006">
    <property type="entry name" value="PRK12351.1"/>
    <property type="match status" value="1"/>
</dbReference>
<dbReference type="PANTHER" id="PTHR11739">
    <property type="entry name" value="CITRATE SYNTHASE"/>
    <property type="match status" value="1"/>
</dbReference>
<dbReference type="PANTHER" id="PTHR11739:SF25">
    <property type="entry name" value="CITRATE SYNTHASE-RELATED PROTEIN DDB_G0287281"/>
    <property type="match status" value="1"/>
</dbReference>
<dbReference type="Pfam" id="PF00285">
    <property type="entry name" value="Citrate_synt"/>
    <property type="match status" value="1"/>
</dbReference>
<dbReference type="PIRSF" id="PIRSF001369">
    <property type="entry name" value="Citrate_synth"/>
    <property type="match status" value="1"/>
</dbReference>
<dbReference type="PRINTS" id="PR00143">
    <property type="entry name" value="CITRTSNTHASE"/>
</dbReference>
<dbReference type="SUPFAM" id="SSF48256">
    <property type="entry name" value="Citrate synthase"/>
    <property type="match status" value="1"/>
</dbReference>
<dbReference type="PROSITE" id="PS00480">
    <property type="entry name" value="CITRATE_SYNTHASE"/>
    <property type="match status" value="1"/>
</dbReference>
<sequence>MTDTTILQNNTHVIKPKKSVALSGVPAGNTALCTVGKSGNDLHYRGYDILDLAEHCEFEEVAHLLIHGKLPTRDELNAYKSKLKALRGLPANVRTVLEALPAASHPMDVMRTGVSALGCTLPEKEGHTVSGARDIADKLLASLSSILLYWYHYSHNGERIQPETDDDSIGGHFLHLLHGEKPTQSWEKAMHISLVLYAEHEFNASTFTSRVIAGTGSDVYSAIIGAIGALRGPKHGGANEVSLEIQQRYETPDEAEADIRKRVENKEVVIGFGHPVYTIADPRHQVIKRVAKQLSEEGGSLKMYHIADRLETVMWETKKMFPNLDWFSAVSYNMMGVPTEMFTPLFVIARVTGWAAHIIEQRQDNKIIRPSANYTGPEDRPFVSIDDRC</sequence>
<reference key="1">
    <citation type="journal article" date="1997" name="J. Bacteriol.">
        <title>Propionate catabolism in Salmonella typhimurium LT2: two divergently transcribed units comprise the prp locus at 8.5 centisomes, prpR encodes a member of the sigma-54 family of activators, and the prpBCDE genes constitute an operon.</title>
        <authorList>
            <person name="Horswill A.R."/>
            <person name="Escalante-Semerena J.C."/>
        </authorList>
    </citation>
    <scope>NUCLEOTIDE SEQUENCE [GENOMIC DNA]</scope>
    <source>
        <strain>LT2 / SGSC1412 / ATCC 700720</strain>
    </source>
</reference>
<reference key="2">
    <citation type="journal article" date="2001" name="Nature">
        <title>Complete genome sequence of Salmonella enterica serovar Typhimurium LT2.</title>
        <authorList>
            <person name="McClelland M."/>
            <person name="Sanderson K.E."/>
            <person name="Spieth J."/>
            <person name="Clifton S.W."/>
            <person name="Latreille P."/>
            <person name="Courtney L."/>
            <person name="Porwollik S."/>
            <person name="Ali J."/>
            <person name="Dante M."/>
            <person name="Du F."/>
            <person name="Hou S."/>
            <person name="Layman D."/>
            <person name="Leonard S."/>
            <person name="Nguyen C."/>
            <person name="Scott K."/>
            <person name="Holmes A."/>
            <person name="Grewal N."/>
            <person name="Mulvaney E."/>
            <person name="Ryan E."/>
            <person name="Sun H."/>
            <person name="Florea L."/>
            <person name="Miller W."/>
            <person name="Stoneking T."/>
            <person name="Nhan M."/>
            <person name="Waterston R."/>
            <person name="Wilson R.K."/>
        </authorList>
    </citation>
    <scope>NUCLEOTIDE SEQUENCE [LARGE SCALE GENOMIC DNA]</scope>
    <source>
        <strain>LT2 / SGSC1412 / ATCC 700720</strain>
    </source>
</reference>
<reference key="3">
    <citation type="journal article" date="1999" name="J. Bacteriol.">
        <title>Salmonella typhimurium LT2 catabolizes propionate via the 2-methylcitric acid cycle.</title>
        <authorList>
            <person name="Horswill A.R."/>
            <person name="Escalante-Semerena J.C."/>
        </authorList>
    </citation>
    <scope>FUNCTION</scope>
    <scope>CATALYTIC ACTIVITY</scope>
    <scope>DISRUPTION PHENOTYPE</scope>
    <scope>BIOPHYSICOCHEMICAL PROPERTIES</scope>
    <scope>SUBSTRATE SPECIFICITY</scope>
    <scope>SUBUNIT</scope>
</reference>
<reference key="4">
    <citation type="journal article" date="2011" name="J. Struct. Biol.">
        <title>Crystal structure of Salmonella typhimurium 2-methylcitrate synthase: Insights on domain movement and substrate specificity.</title>
        <authorList>
            <person name="Chittori S."/>
            <person name="Savithri H.S."/>
            <person name="Murthy M.R."/>
        </authorList>
    </citation>
    <scope>X-RAY CRYSTALLOGRAPHY (2.41 ANGSTROMS)</scope>
    <scope>FUNCTION</scope>
    <scope>CATALYTIC ACTIVITY</scope>
    <scope>BIOPHYSICOCHEMICAL PROPERTIES</scope>
    <scope>SUBSTRATE SPECIFICITY</scope>
    <scope>SUBUNIT</scope>
</reference>
<accession>Q56063</accession>
<evidence type="ECO:0000250" key="1">
    <source>
        <dbReference type="UniProtKB" id="I6Y9Q3"/>
    </source>
</evidence>
<evidence type="ECO:0000250" key="2">
    <source>
        <dbReference type="UniProtKB" id="O34002"/>
    </source>
</evidence>
<evidence type="ECO:0000269" key="3">
    <source>
    </source>
</evidence>
<evidence type="ECO:0000269" key="4">
    <source>
    </source>
</evidence>
<evidence type="ECO:0000303" key="5">
    <source>
    </source>
</evidence>
<evidence type="ECO:0000303" key="6">
    <source>
    </source>
</evidence>
<evidence type="ECO:0000303" key="7">
    <source>
    </source>
</evidence>
<evidence type="ECO:0000305" key="8"/>
<evidence type="ECO:0000305" key="9">
    <source>
    </source>
</evidence>
<evidence type="ECO:0000305" key="10">
    <source>
    </source>
</evidence>
<evidence type="ECO:0007829" key="11">
    <source>
        <dbReference type="PDB" id="3O8J"/>
    </source>
</evidence>
<organism>
    <name type="scientific">Salmonella typhimurium (strain LT2 / SGSC1412 / ATCC 700720)</name>
    <dbReference type="NCBI Taxonomy" id="99287"/>
    <lineage>
        <taxon>Bacteria</taxon>
        <taxon>Pseudomonadati</taxon>
        <taxon>Pseudomonadota</taxon>
        <taxon>Gammaproteobacteria</taxon>
        <taxon>Enterobacterales</taxon>
        <taxon>Enterobacteriaceae</taxon>
        <taxon>Salmonella</taxon>
    </lineage>
</organism>
<keyword id="KW-0002">3D-structure</keyword>
<keyword id="KW-1185">Reference proteome</keyword>
<keyword id="KW-0808">Transferase</keyword>
<keyword id="KW-0816">Tricarboxylic acid cycle</keyword>
<gene>
    <name evidence="7" type="primary">prpC</name>
    <name type="ordered locus">STM0369</name>
</gene>
<comment type="function">
    <text evidence="3 4">Involved in the catabolism of short chain fatty acids (SCFA) via the tricarboxylic acid (TCA)(acetyl degradation route) and via the 2-methylcitrate cycle I (propionate degradation route). Catalyzes the Claisen condensation of propionyl-CoA and oxaloacetate (OAA) to yield 2-methylcitrate (2-MC) and CoA. Also catalyzes the condensation of oxaloacetate with acetyl-CoA or butyryl-CoA but with a lower specificity.</text>
</comment>
<comment type="catalytic activity">
    <reaction evidence="3 4">
        <text>propanoyl-CoA + oxaloacetate + H2O = (2S,3S)-2-methylcitrate + CoA + H(+)</text>
        <dbReference type="Rhea" id="RHEA:23780"/>
        <dbReference type="ChEBI" id="CHEBI:15377"/>
        <dbReference type="ChEBI" id="CHEBI:15378"/>
        <dbReference type="ChEBI" id="CHEBI:16452"/>
        <dbReference type="ChEBI" id="CHEBI:57287"/>
        <dbReference type="ChEBI" id="CHEBI:57392"/>
        <dbReference type="ChEBI" id="CHEBI:58853"/>
        <dbReference type="EC" id="2.3.3.5"/>
    </reaction>
</comment>
<comment type="catalytic activity">
    <reaction evidence="3 4">
        <text>oxaloacetate + acetyl-CoA + H2O = citrate + CoA + H(+)</text>
        <dbReference type="Rhea" id="RHEA:16845"/>
        <dbReference type="ChEBI" id="CHEBI:15377"/>
        <dbReference type="ChEBI" id="CHEBI:15378"/>
        <dbReference type="ChEBI" id="CHEBI:16452"/>
        <dbReference type="ChEBI" id="CHEBI:16947"/>
        <dbReference type="ChEBI" id="CHEBI:57287"/>
        <dbReference type="ChEBI" id="CHEBI:57288"/>
        <dbReference type="EC" id="2.3.3.16"/>
    </reaction>
</comment>
<comment type="biophysicochemical properties">
    <kinetics>
        <KM evidence="3">12 uM for oxaloacetate (with propionyl-CoA)</KM>
        <KM evidence="4">13 uM for oxaloacetate (with propionyl-CoA at pH 8 and 30 degrees Celsius)</KM>
        <KM evidence="3">14 uM for oxaloacetate (with acetyl-CoA)</KM>
        <KM evidence="4">15 uM for oxaloacetate (with acetyl-CoA at pH 8 and 30 degrees Celsius)</KM>
        <KM evidence="4">45 uM for propionyl-CoA (at pH 8 and 30 degrees Celsius)</KM>
        <KM evidence="3">48 uM for propionyl-CoA</KM>
        <KM evidence="4">265 uM for acetyl-CoA (at pH 8 and 30 degrees Celsius)</KM>
        <KM evidence="3">285 uM for acetyl-CoA</KM>
        <Vmax evidence="3">2.0 umol/min/mg enzyme with acetyl-CoA as substrate</Vmax>
        <Vmax evidence="4">2.5 umol/min/mg enzyme with acetyl-CoA as substrate (at pH 8 and 30 degrees Celsius)</Vmax>
        <Vmax evidence="3">10.0 umol/min/mg enzyme with propionyl-CoA as substrate</Vmax>
        <Vmax evidence="4">11.0 umol/min/mg enzyme with propionyl-CoA as substrate (at pH 8 and 30 degrees Celsius)</Vmax>
        <text evidence="3 4">kcat is 1.4 sec(-1) for citrate synthase activity with acetyl-CoA as substrate. kcat is 1.87 sec(-1) for citrate synthase activity with acetyl-CoA as substrate (at pH 8 and 30 degrees Celsius). kcat is 7.4 sec(-1) for 2-methylcitrate synthase activity with propionyl-CoA as substrate. kcat is 8.25 sec(-1) for 2-methylcitrate synthase activity with propionyl-CoA as substrate (at pH 8 and 30 degrees Celsius).</text>
    </kinetics>
</comment>
<comment type="pathway">
    <text evidence="10">Organic acid metabolism; propanoate degradation.</text>
</comment>
<comment type="pathway">
    <text evidence="10">Carbohydrate metabolism; tricarboxylic acid cycle; isocitrate from oxaloacetate: step 1/2.</text>
</comment>
<comment type="subunit">
    <text evidence="3 4">Homodimer at low concentrations and converted to a larger oligomers at higher concentrations.</text>
</comment>
<comment type="disruption phenotype">
    <text evidence="3">Cells lacking this gene are unable to accumulate propionyl-CoA.</text>
</comment>
<comment type="similarity">
    <text evidence="8">Belongs to the citrate synthase family.</text>
</comment>